<keyword id="KW-0119">Carbohydrate metabolism</keyword>
<keyword id="KW-0313">Glucose metabolism</keyword>
<keyword id="KW-0521">NADP</keyword>
<keyword id="KW-0560">Oxidoreductase</keyword>
<keyword id="KW-1185">Reference proteome</keyword>
<feature type="chain" id="PRO_0000068123" description="Glucose-6-phosphate 1-dehydrogenase">
    <location>
        <begin position="1"/>
        <end position="425"/>
    </location>
</feature>
<feature type="active site" description="Proton acceptor" evidence="1">
    <location>
        <position position="225"/>
    </location>
</feature>
<feature type="binding site" evidence="1">
    <location>
        <position position="44"/>
    </location>
    <ligand>
        <name>NADP(+)</name>
        <dbReference type="ChEBI" id="CHEBI:58349"/>
    </ligand>
</feature>
<feature type="binding site" evidence="1">
    <location>
        <position position="135"/>
    </location>
    <ligand>
        <name>NADP(+)</name>
        <dbReference type="ChEBI" id="CHEBI:58349"/>
    </ligand>
</feature>
<feature type="binding site" evidence="1">
    <location>
        <position position="165"/>
    </location>
    <ligand>
        <name>substrate</name>
    </ligand>
</feature>
<feature type="binding site" evidence="1">
    <location>
        <position position="169"/>
    </location>
    <ligand>
        <name>substrate</name>
    </ligand>
</feature>
<feature type="binding site" evidence="1">
    <location>
        <position position="201"/>
    </location>
    <ligand>
        <name>substrate</name>
    </ligand>
</feature>
<feature type="binding site" evidence="1">
    <location>
        <position position="220"/>
    </location>
    <ligand>
        <name>substrate</name>
    </ligand>
</feature>
<feature type="binding site" evidence="1">
    <location>
        <position position="311"/>
    </location>
    <ligand>
        <name>substrate</name>
    </ligand>
</feature>
<organism>
    <name type="scientific">Helicobacter pylori (strain ATCC 700392 / 26695)</name>
    <name type="common">Campylobacter pylori</name>
    <dbReference type="NCBI Taxonomy" id="85962"/>
    <lineage>
        <taxon>Bacteria</taxon>
        <taxon>Pseudomonadati</taxon>
        <taxon>Campylobacterota</taxon>
        <taxon>Epsilonproteobacteria</taxon>
        <taxon>Campylobacterales</taxon>
        <taxon>Helicobacteraceae</taxon>
        <taxon>Helicobacter</taxon>
    </lineage>
</organism>
<dbReference type="EC" id="1.1.1.49" evidence="1"/>
<dbReference type="EMBL" id="AE000511">
    <property type="protein sequence ID" value="AAD08144.1"/>
    <property type="molecule type" value="Genomic_DNA"/>
</dbReference>
<dbReference type="PIR" id="E64657">
    <property type="entry name" value="E64657"/>
</dbReference>
<dbReference type="RefSeq" id="NP_207892.1">
    <property type="nucleotide sequence ID" value="NC_000915.1"/>
</dbReference>
<dbReference type="RefSeq" id="WP_000883625.1">
    <property type="nucleotide sequence ID" value="NC_018939.1"/>
</dbReference>
<dbReference type="SMR" id="P56110"/>
<dbReference type="FunCoup" id="P56110">
    <property type="interactions" value="283"/>
</dbReference>
<dbReference type="STRING" id="85962.HP_1101"/>
<dbReference type="PaxDb" id="85962-C694_05680"/>
<dbReference type="EnsemblBacteria" id="AAD08144">
    <property type="protein sequence ID" value="AAD08144"/>
    <property type="gene ID" value="HP_1101"/>
</dbReference>
<dbReference type="KEGG" id="heo:C694_05680"/>
<dbReference type="KEGG" id="hpy:HP_1101"/>
<dbReference type="PATRIC" id="fig|85962.47.peg.1181"/>
<dbReference type="eggNOG" id="COG0364">
    <property type="taxonomic scope" value="Bacteria"/>
</dbReference>
<dbReference type="InParanoid" id="P56110"/>
<dbReference type="OrthoDB" id="9802739at2"/>
<dbReference type="PhylomeDB" id="P56110"/>
<dbReference type="UniPathway" id="UPA00115">
    <property type="reaction ID" value="UER00408"/>
</dbReference>
<dbReference type="Proteomes" id="UP000000429">
    <property type="component" value="Chromosome"/>
</dbReference>
<dbReference type="GO" id="GO:0005829">
    <property type="term" value="C:cytosol"/>
    <property type="evidence" value="ECO:0000318"/>
    <property type="project" value="GO_Central"/>
</dbReference>
<dbReference type="GO" id="GO:0004345">
    <property type="term" value="F:glucose-6-phosphate dehydrogenase activity"/>
    <property type="evidence" value="ECO:0000318"/>
    <property type="project" value="GO_Central"/>
</dbReference>
<dbReference type="GO" id="GO:0050661">
    <property type="term" value="F:NADP binding"/>
    <property type="evidence" value="ECO:0007669"/>
    <property type="project" value="UniProtKB-UniRule"/>
</dbReference>
<dbReference type="GO" id="GO:0006006">
    <property type="term" value="P:glucose metabolic process"/>
    <property type="evidence" value="ECO:0000318"/>
    <property type="project" value="GO_Central"/>
</dbReference>
<dbReference type="GO" id="GO:0009051">
    <property type="term" value="P:pentose-phosphate shunt, oxidative branch"/>
    <property type="evidence" value="ECO:0000318"/>
    <property type="project" value="GO_Central"/>
</dbReference>
<dbReference type="Gene3D" id="3.30.360.10">
    <property type="entry name" value="Dihydrodipicolinate Reductase, domain 2"/>
    <property type="match status" value="1"/>
</dbReference>
<dbReference type="Gene3D" id="3.40.50.720">
    <property type="entry name" value="NAD(P)-binding Rossmann-like Domain"/>
    <property type="match status" value="1"/>
</dbReference>
<dbReference type="HAMAP" id="MF_00966">
    <property type="entry name" value="G6PD"/>
    <property type="match status" value="1"/>
</dbReference>
<dbReference type="InterPro" id="IPR001282">
    <property type="entry name" value="G6P_DH"/>
</dbReference>
<dbReference type="InterPro" id="IPR019796">
    <property type="entry name" value="G6P_DH_AS"/>
</dbReference>
<dbReference type="InterPro" id="IPR022675">
    <property type="entry name" value="G6P_DH_C"/>
</dbReference>
<dbReference type="InterPro" id="IPR022674">
    <property type="entry name" value="G6P_DH_NAD-bd"/>
</dbReference>
<dbReference type="InterPro" id="IPR036291">
    <property type="entry name" value="NAD(P)-bd_dom_sf"/>
</dbReference>
<dbReference type="NCBIfam" id="NF004331">
    <property type="entry name" value="PRK05722.2-1"/>
    <property type="match status" value="1"/>
</dbReference>
<dbReference type="PANTHER" id="PTHR23429:SF0">
    <property type="entry name" value="GLUCOSE-6-PHOSPHATE 1-DEHYDROGENASE"/>
    <property type="match status" value="1"/>
</dbReference>
<dbReference type="PANTHER" id="PTHR23429">
    <property type="entry name" value="GLUCOSE-6-PHOSPHATE 1-DEHYDROGENASE G6PD"/>
    <property type="match status" value="1"/>
</dbReference>
<dbReference type="Pfam" id="PF02781">
    <property type="entry name" value="G6PD_C"/>
    <property type="match status" value="1"/>
</dbReference>
<dbReference type="Pfam" id="PF00479">
    <property type="entry name" value="G6PD_N"/>
    <property type="match status" value="1"/>
</dbReference>
<dbReference type="PIRSF" id="PIRSF000110">
    <property type="entry name" value="G6PD"/>
    <property type="match status" value="1"/>
</dbReference>
<dbReference type="PRINTS" id="PR00079">
    <property type="entry name" value="G6PDHDRGNASE"/>
</dbReference>
<dbReference type="SUPFAM" id="SSF55347">
    <property type="entry name" value="Glyceraldehyde-3-phosphate dehydrogenase-like, C-terminal domain"/>
    <property type="match status" value="1"/>
</dbReference>
<dbReference type="SUPFAM" id="SSF51735">
    <property type="entry name" value="NAD(P)-binding Rossmann-fold domains"/>
    <property type="match status" value="1"/>
</dbReference>
<dbReference type="PROSITE" id="PS00069">
    <property type="entry name" value="G6P_DEHYDROGENASE"/>
    <property type="match status" value="1"/>
</dbReference>
<name>G6PD_HELPY</name>
<evidence type="ECO:0000255" key="1">
    <source>
        <dbReference type="HAMAP-Rule" id="MF_00966"/>
    </source>
</evidence>
<protein>
    <recommendedName>
        <fullName evidence="1">Glucose-6-phosphate 1-dehydrogenase</fullName>
        <shortName evidence="1">G6PD</shortName>
        <ecNumber evidence="1">1.1.1.49</ecNumber>
    </recommendedName>
</protein>
<proteinExistence type="inferred from homology"/>
<sequence length="425" mass="49541">MLDFDLVLFGATGDLAMRKLFVSLYEIYTHYGFKNDSRIIASGRKELSNEEFLTLLCEKTQLHSREKGREFLAHISYLCVRLDNPKDFEELSKIATKNKPLIFYFSISPSFFATTAQHLAKNALNHANTRLILEKPLGHDLKTCKEIFQSISVFFKEEQIFRIDHYLGKKGVQNILELRLNNPILNILWDQISAVEICVYETLGVEERGEFYDKIGALRDMVQNHLLQVLSLIATDLPNNLKDLRKEKIKVLKTLQPPKDFKKQVIRAQYQGYRDENKVHKESQTETFVAIKAFLDTPKFKGVPFYLKHAKKMPHNQASVKIHFNAVNTLEFFLSQDKITLTLKDHQNPLILETHNKQEFLRPYAKLLYDAIQNNHNNFAHQLELEASWVFIDTLIEGFMNNATPLYSYESHHLNESEFLKPLYQ</sequence>
<reference key="1">
    <citation type="journal article" date="1997" name="Nature">
        <title>The complete genome sequence of the gastric pathogen Helicobacter pylori.</title>
        <authorList>
            <person name="Tomb J.-F."/>
            <person name="White O."/>
            <person name="Kerlavage A.R."/>
            <person name="Clayton R.A."/>
            <person name="Sutton G.G."/>
            <person name="Fleischmann R.D."/>
            <person name="Ketchum K.A."/>
            <person name="Klenk H.-P."/>
            <person name="Gill S.R."/>
            <person name="Dougherty B.A."/>
            <person name="Nelson K.E."/>
            <person name="Quackenbush J."/>
            <person name="Zhou L."/>
            <person name="Kirkness E.F."/>
            <person name="Peterson S.N."/>
            <person name="Loftus B.J."/>
            <person name="Richardson D.L."/>
            <person name="Dodson R.J."/>
            <person name="Khalak H.G."/>
            <person name="Glodek A."/>
            <person name="McKenney K."/>
            <person name="FitzGerald L.M."/>
            <person name="Lee N."/>
            <person name="Adams M.D."/>
            <person name="Hickey E.K."/>
            <person name="Berg D.E."/>
            <person name="Gocayne J.D."/>
            <person name="Utterback T.R."/>
            <person name="Peterson J.D."/>
            <person name="Kelley J.M."/>
            <person name="Cotton M.D."/>
            <person name="Weidman J.F."/>
            <person name="Fujii C."/>
            <person name="Bowman C."/>
            <person name="Watthey L."/>
            <person name="Wallin E."/>
            <person name="Hayes W.S."/>
            <person name="Borodovsky M."/>
            <person name="Karp P.D."/>
            <person name="Smith H.O."/>
            <person name="Fraser C.M."/>
            <person name="Venter J.C."/>
        </authorList>
    </citation>
    <scope>NUCLEOTIDE SEQUENCE [LARGE SCALE GENOMIC DNA]</scope>
    <source>
        <strain>ATCC 700392 / 26695</strain>
    </source>
</reference>
<accession>P56110</accession>
<comment type="function">
    <text evidence="1">Catalyzes the oxidation of glucose 6-phosphate to 6-phosphogluconolactone.</text>
</comment>
<comment type="catalytic activity">
    <reaction evidence="1">
        <text>D-glucose 6-phosphate + NADP(+) = 6-phospho-D-glucono-1,5-lactone + NADPH + H(+)</text>
        <dbReference type="Rhea" id="RHEA:15841"/>
        <dbReference type="ChEBI" id="CHEBI:15378"/>
        <dbReference type="ChEBI" id="CHEBI:57783"/>
        <dbReference type="ChEBI" id="CHEBI:57955"/>
        <dbReference type="ChEBI" id="CHEBI:58349"/>
        <dbReference type="ChEBI" id="CHEBI:61548"/>
        <dbReference type="EC" id="1.1.1.49"/>
    </reaction>
</comment>
<comment type="pathway">
    <text evidence="1">Carbohydrate degradation; pentose phosphate pathway; D-ribulose 5-phosphate from D-glucose 6-phosphate (oxidative stage): step 1/3.</text>
</comment>
<comment type="similarity">
    <text evidence="1">Belongs to the glucose-6-phosphate dehydrogenase family.</text>
</comment>
<gene>
    <name evidence="1" type="primary">zwf</name>
    <name type="ordered locus">HP_1101</name>
</gene>